<name>KGUA_NITV2</name>
<comment type="function">
    <text evidence="1">Essential for recycling GMP and indirectly, cGMP.</text>
</comment>
<comment type="catalytic activity">
    <reaction evidence="1">
        <text>GMP + ATP = GDP + ADP</text>
        <dbReference type="Rhea" id="RHEA:20780"/>
        <dbReference type="ChEBI" id="CHEBI:30616"/>
        <dbReference type="ChEBI" id="CHEBI:58115"/>
        <dbReference type="ChEBI" id="CHEBI:58189"/>
        <dbReference type="ChEBI" id="CHEBI:456216"/>
        <dbReference type="EC" id="2.7.4.8"/>
    </reaction>
</comment>
<comment type="subcellular location">
    <subcellularLocation>
        <location evidence="1">Cytoplasm</location>
    </subcellularLocation>
</comment>
<comment type="similarity">
    <text evidence="1">Belongs to the guanylate kinase family.</text>
</comment>
<accession>Q72DM9</accession>
<proteinExistence type="inferred from homology"/>
<organism>
    <name type="scientific">Nitratidesulfovibrio vulgaris (strain ATCC 29579 / DSM 644 / CCUG 34227 / NCIMB 8303 / VKM B-1760 / Hildenborough)</name>
    <name type="common">Desulfovibrio vulgaris</name>
    <dbReference type="NCBI Taxonomy" id="882"/>
    <lineage>
        <taxon>Bacteria</taxon>
        <taxon>Pseudomonadati</taxon>
        <taxon>Thermodesulfobacteriota</taxon>
        <taxon>Desulfovibrionia</taxon>
        <taxon>Desulfovibrionales</taxon>
        <taxon>Desulfovibrionaceae</taxon>
        <taxon>Nitratidesulfovibrio</taxon>
    </lineage>
</organism>
<protein>
    <recommendedName>
        <fullName evidence="1">Guanylate kinase</fullName>
        <ecNumber evidence="1">2.7.4.8</ecNumber>
    </recommendedName>
    <alternativeName>
        <fullName evidence="1">GMP kinase</fullName>
    </alternativeName>
</protein>
<evidence type="ECO:0000255" key="1">
    <source>
        <dbReference type="HAMAP-Rule" id="MF_00328"/>
    </source>
</evidence>
<sequence>MGRERSGIVLVLCAPSGTGKTTLTRRLLTEFPRFAFSVSYTTRKPRNGEVDGKDYHFVTVEAFLRLRDAGFFAEWAEVHGNFYGTPLKATLDLLDEGRDVLFDIDVQGARQLRASLQRGRYVFIMPPSRDELEHRLRARGTDDEETIARRLANAAKELREARRFDAWIVNDDLERAYDELRAAYIEETLSPECRSAFLDGLLQGWND</sequence>
<gene>
    <name evidence="1" type="primary">gmk</name>
    <name type="ordered locus">DVU_0900</name>
</gene>
<keyword id="KW-0067">ATP-binding</keyword>
<keyword id="KW-0963">Cytoplasm</keyword>
<keyword id="KW-0418">Kinase</keyword>
<keyword id="KW-0547">Nucleotide-binding</keyword>
<keyword id="KW-1185">Reference proteome</keyword>
<keyword id="KW-0808">Transferase</keyword>
<reference key="1">
    <citation type="journal article" date="2004" name="Nat. Biotechnol.">
        <title>The genome sequence of the anaerobic, sulfate-reducing bacterium Desulfovibrio vulgaris Hildenborough.</title>
        <authorList>
            <person name="Heidelberg J.F."/>
            <person name="Seshadri R."/>
            <person name="Haveman S.A."/>
            <person name="Hemme C.L."/>
            <person name="Paulsen I.T."/>
            <person name="Kolonay J.F."/>
            <person name="Eisen J.A."/>
            <person name="Ward N.L."/>
            <person name="Methe B.A."/>
            <person name="Brinkac L.M."/>
            <person name="Daugherty S.C."/>
            <person name="DeBoy R.T."/>
            <person name="Dodson R.J."/>
            <person name="Durkin A.S."/>
            <person name="Madupu R."/>
            <person name="Nelson W.C."/>
            <person name="Sullivan S.A."/>
            <person name="Fouts D.E."/>
            <person name="Haft D.H."/>
            <person name="Selengut J."/>
            <person name="Peterson J.D."/>
            <person name="Davidsen T.M."/>
            <person name="Zafar N."/>
            <person name="Zhou L."/>
            <person name="Radune D."/>
            <person name="Dimitrov G."/>
            <person name="Hance M."/>
            <person name="Tran K."/>
            <person name="Khouri H.M."/>
            <person name="Gill J."/>
            <person name="Utterback T.R."/>
            <person name="Feldblyum T.V."/>
            <person name="Wall J.D."/>
            <person name="Voordouw G."/>
            <person name="Fraser C.M."/>
        </authorList>
    </citation>
    <scope>NUCLEOTIDE SEQUENCE [LARGE SCALE GENOMIC DNA]</scope>
    <source>
        <strain>ATCC 29579 / DSM 644 / CCUG 34227 / NCIMB 8303 / VKM B-1760 / Hildenborough</strain>
    </source>
</reference>
<feature type="chain" id="PRO_0000170533" description="Guanylate kinase">
    <location>
        <begin position="1"/>
        <end position="207"/>
    </location>
</feature>
<feature type="domain" description="Guanylate kinase-like" evidence="1">
    <location>
        <begin position="7"/>
        <end position="185"/>
    </location>
</feature>
<feature type="binding site" evidence="1">
    <location>
        <begin position="14"/>
        <end position="21"/>
    </location>
    <ligand>
        <name>ATP</name>
        <dbReference type="ChEBI" id="CHEBI:30616"/>
    </ligand>
</feature>
<dbReference type="EC" id="2.7.4.8" evidence="1"/>
<dbReference type="EMBL" id="AE017285">
    <property type="protein sequence ID" value="AAS95380.1"/>
    <property type="molecule type" value="Genomic_DNA"/>
</dbReference>
<dbReference type="RefSeq" id="WP_010938199.1">
    <property type="nucleotide sequence ID" value="NC_002937.3"/>
</dbReference>
<dbReference type="RefSeq" id="YP_010121.1">
    <property type="nucleotide sequence ID" value="NC_002937.3"/>
</dbReference>
<dbReference type="SMR" id="Q72DM9"/>
<dbReference type="STRING" id="882.DVU_0900"/>
<dbReference type="PaxDb" id="882-DVU_0900"/>
<dbReference type="EnsemblBacteria" id="AAS95380">
    <property type="protein sequence ID" value="AAS95380"/>
    <property type="gene ID" value="DVU_0900"/>
</dbReference>
<dbReference type="KEGG" id="dvu:DVU_0900"/>
<dbReference type="PATRIC" id="fig|882.5.peg.844"/>
<dbReference type="eggNOG" id="COG0194">
    <property type="taxonomic scope" value="Bacteria"/>
</dbReference>
<dbReference type="HOGENOM" id="CLU_001715_1_2_7"/>
<dbReference type="OrthoDB" id="9808150at2"/>
<dbReference type="PhylomeDB" id="Q72DM9"/>
<dbReference type="Proteomes" id="UP000002194">
    <property type="component" value="Chromosome"/>
</dbReference>
<dbReference type="GO" id="GO:0005829">
    <property type="term" value="C:cytosol"/>
    <property type="evidence" value="ECO:0007669"/>
    <property type="project" value="TreeGrafter"/>
</dbReference>
<dbReference type="GO" id="GO:0005524">
    <property type="term" value="F:ATP binding"/>
    <property type="evidence" value="ECO:0007669"/>
    <property type="project" value="UniProtKB-UniRule"/>
</dbReference>
<dbReference type="GO" id="GO:0004385">
    <property type="term" value="F:guanylate kinase activity"/>
    <property type="evidence" value="ECO:0007669"/>
    <property type="project" value="UniProtKB-UniRule"/>
</dbReference>
<dbReference type="CDD" id="cd00071">
    <property type="entry name" value="GMPK"/>
    <property type="match status" value="1"/>
</dbReference>
<dbReference type="FunFam" id="3.30.63.10:FF:000002">
    <property type="entry name" value="Guanylate kinase 1"/>
    <property type="match status" value="1"/>
</dbReference>
<dbReference type="Gene3D" id="3.30.63.10">
    <property type="entry name" value="Guanylate Kinase phosphate binding domain"/>
    <property type="match status" value="1"/>
</dbReference>
<dbReference type="Gene3D" id="3.40.50.300">
    <property type="entry name" value="P-loop containing nucleotide triphosphate hydrolases"/>
    <property type="match status" value="1"/>
</dbReference>
<dbReference type="HAMAP" id="MF_00328">
    <property type="entry name" value="Guanylate_kinase"/>
    <property type="match status" value="1"/>
</dbReference>
<dbReference type="InterPro" id="IPR008145">
    <property type="entry name" value="GK/Ca_channel_bsu"/>
</dbReference>
<dbReference type="InterPro" id="IPR008144">
    <property type="entry name" value="Guanylate_kin-like_dom"/>
</dbReference>
<dbReference type="InterPro" id="IPR017665">
    <property type="entry name" value="Guanylate_kinase"/>
</dbReference>
<dbReference type="InterPro" id="IPR020590">
    <property type="entry name" value="Guanylate_kinase_CS"/>
</dbReference>
<dbReference type="InterPro" id="IPR027417">
    <property type="entry name" value="P-loop_NTPase"/>
</dbReference>
<dbReference type="NCBIfam" id="TIGR03263">
    <property type="entry name" value="guanyl_kin"/>
    <property type="match status" value="1"/>
</dbReference>
<dbReference type="PANTHER" id="PTHR23117:SF13">
    <property type="entry name" value="GUANYLATE KINASE"/>
    <property type="match status" value="1"/>
</dbReference>
<dbReference type="PANTHER" id="PTHR23117">
    <property type="entry name" value="GUANYLATE KINASE-RELATED"/>
    <property type="match status" value="1"/>
</dbReference>
<dbReference type="Pfam" id="PF00625">
    <property type="entry name" value="Guanylate_kin"/>
    <property type="match status" value="1"/>
</dbReference>
<dbReference type="SMART" id="SM00072">
    <property type="entry name" value="GuKc"/>
    <property type="match status" value="1"/>
</dbReference>
<dbReference type="SUPFAM" id="SSF52540">
    <property type="entry name" value="P-loop containing nucleoside triphosphate hydrolases"/>
    <property type="match status" value="1"/>
</dbReference>
<dbReference type="PROSITE" id="PS00856">
    <property type="entry name" value="GUANYLATE_KINASE_1"/>
    <property type="match status" value="1"/>
</dbReference>
<dbReference type="PROSITE" id="PS50052">
    <property type="entry name" value="GUANYLATE_KINASE_2"/>
    <property type="match status" value="1"/>
</dbReference>